<gene>
    <name type="primary">THP3</name>
    <name type="ordered locus">YPR045C</name>
    <name type="ORF">YP9499.03c</name>
</gene>
<evidence type="ECO:0000255" key="1">
    <source>
        <dbReference type="PROSITE-ProRule" id="PRU01185"/>
    </source>
</evidence>
<evidence type="ECO:0000256" key="2">
    <source>
        <dbReference type="SAM" id="MobiDB-lite"/>
    </source>
</evidence>
<evidence type="ECO:0000269" key="3">
    <source>
    </source>
</evidence>
<evidence type="ECO:0000269" key="4">
    <source>
    </source>
</evidence>
<evidence type="ECO:0000269" key="5">
    <source>
    </source>
</evidence>
<evidence type="ECO:0000269" key="6">
    <source>
    </source>
</evidence>
<evidence type="ECO:0000269" key="7">
    <source>
    </source>
</evidence>
<evidence type="ECO:0000305" key="8"/>
<evidence type="ECO:0007744" key="9">
    <source>
    </source>
</evidence>
<evidence type="ECO:0007829" key="10">
    <source>
        <dbReference type="PDB" id="7EWF"/>
    </source>
</evidence>
<evidence type="ECO:0007829" key="11">
    <source>
        <dbReference type="PDB" id="7EWM"/>
    </source>
</evidence>
<accession>Q12049</accession>
<accession>D6W453</accession>
<accession>Q07109</accession>
<protein>
    <recommendedName>
        <fullName>Protein THP3</fullName>
    </recommendedName>
    <alternativeName>
        <fullName>THO-related protein 3</fullName>
    </alternativeName>
</protein>
<comment type="function">
    <text evidence="5 6 7">Forms a complex with CSN12 that is recruited to transcribed genes and required for transcription elongation. May also be involved in pre-mRNA splicing.</text>
</comment>
<comment type="subunit">
    <text evidence="5 6 7">Interacts with CSN12 and SEM1.</text>
</comment>
<comment type="interaction">
    <interactant intactId="EBI-34263">
        <id>Q12049</id>
    </interactant>
    <interactant intactId="EBI-763">
        <id>P47130</id>
        <label>CSN12</label>
    </interactant>
    <organismsDiffer>false</organismsDiffer>
    <experiments>3</experiments>
</comment>
<comment type="subcellular location">
    <subcellularLocation>
        <location evidence="3">Nucleus</location>
    </subcellularLocation>
</comment>
<comment type="miscellaneous">
    <text evidence="4">Present with 3360 molecules/cell in log phase SD medium.</text>
</comment>
<comment type="similarity">
    <text evidence="8">Belongs to the THP3 family.</text>
</comment>
<reference key="1">
    <citation type="journal article" date="1997" name="Nature">
        <title>The nucleotide sequence of Saccharomyces cerevisiae chromosome XVI.</title>
        <authorList>
            <person name="Bussey H."/>
            <person name="Storms R.K."/>
            <person name="Ahmed A."/>
            <person name="Albermann K."/>
            <person name="Allen E."/>
            <person name="Ansorge W."/>
            <person name="Araujo R."/>
            <person name="Aparicio A."/>
            <person name="Barrell B.G."/>
            <person name="Badcock K."/>
            <person name="Benes V."/>
            <person name="Botstein D."/>
            <person name="Bowman S."/>
            <person name="Brueckner M."/>
            <person name="Carpenter J."/>
            <person name="Cherry J.M."/>
            <person name="Chung E."/>
            <person name="Churcher C.M."/>
            <person name="Coster F."/>
            <person name="Davis K."/>
            <person name="Davis R.W."/>
            <person name="Dietrich F.S."/>
            <person name="Delius H."/>
            <person name="DiPaolo T."/>
            <person name="Dubois E."/>
            <person name="Duesterhoeft A."/>
            <person name="Duncan M."/>
            <person name="Floeth M."/>
            <person name="Fortin N."/>
            <person name="Friesen J.D."/>
            <person name="Fritz C."/>
            <person name="Goffeau A."/>
            <person name="Hall J."/>
            <person name="Hebling U."/>
            <person name="Heumann K."/>
            <person name="Hilbert H."/>
            <person name="Hillier L.W."/>
            <person name="Hunicke-Smith S."/>
            <person name="Hyman R.W."/>
            <person name="Johnston M."/>
            <person name="Kalman S."/>
            <person name="Kleine K."/>
            <person name="Komp C."/>
            <person name="Kurdi O."/>
            <person name="Lashkari D."/>
            <person name="Lew H."/>
            <person name="Lin A."/>
            <person name="Lin D."/>
            <person name="Louis E.J."/>
            <person name="Marathe R."/>
            <person name="Messenguy F."/>
            <person name="Mewes H.-W."/>
            <person name="Mirtipati S."/>
            <person name="Moestl D."/>
            <person name="Mueller-Auer S."/>
            <person name="Namath A."/>
            <person name="Nentwich U."/>
            <person name="Oefner P."/>
            <person name="Pearson D."/>
            <person name="Petel F.X."/>
            <person name="Pohl T.M."/>
            <person name="Purnelle B."/>
            <person name="Rajandream M.A."/>
            <person name="Rechmann S."/>
            <person name="Rieger M."/>
            <person name="Riles L."/>
            <person name="Roberts D."/>
            <person name="Schaefer M."/>
            <person name="Scharfe M."/>
            <person name="Scherens B."/>
            <person name="Schramm S."/>
            <person name="Schroeder M."/>
            <person name="Sdicu A.-M."/>
            <person name="Tettelin H."/>
            <person name="Urrestarazu L.A."/>
            <person name="Ushinsky S."/>
            <person name="Vierendeels F."/>
            <person name="Vissers S."/>
            <person name="Voss H."/>
            <person name="Walsh S.V."/>
            <person name="Wambutt R."/>
            <person name="Wang Y."/>
            <person name="Wedler E."/>
            <person name="Wedler H."/>
            <person name="Winnett E."/>
            <person name="Zhong W.-W."/>
            <person name="Zollner A."/>
            <person name="Vo D.H."/>
            <person name="Hani J."/>
        </authorList>
    </citation>
    <scope>NUCLEOTIDE SEQUENCE [LARGE SCALE GENOMIC DNA]</scope>
    <source>
        <strain>ATCC 204508 / S288c</strain>
    </source>
</reference>
<reference key="2">
    <citation type="journal article" date="2014" name="G3 (Bethesda)">
        <title>The reference genome sequence of Saccharomyces cerevisiae: Then and now.</title>
        <authorList>
            <person name="Engel S.R."/>
            <person name="Dietrich F.S."/>
            <person name="Fisk D.G."/>
            <person name="Binkley G."/>
            <person name="Balakrishnan R."/>
            <person name="Costanzo M.C."/>
            <person name="Dwight S.S."/>
            <person name="Hitz B.C."/>
            <person name="Karra K."/>
            <person name="Nash R.S."/>
            <person name="Weng S."/>
            <person name="Wong E.D."/>
            <person name="Lloyd P."/>
            <person name="Skrzypek M.S."/>
            <person name="Miyasato S.R."/>
            <person name="Simison M."/>
            <person name="Cherry J.M."/>
        </authorList>
    </citation>
    <scope>GENOME REANNOTATION</scope>
    <source>
        <strain>ATCC 204508 / S288c</strain>
    </source>
</reference>
<reference key="3">
    <citation type="thesis" date="1996" institute="University of Wroclaw" country="Poland">
        <authorList>
            <person name="Waskiewicz-Staniorowska B."/>
        </authorList>
    </citation>
    <scope>NUCLEOTIDE SEQUENCE [GENOMIC DNA] OF 299-470</scope>
    <source>
        <strain>ATCC 46191 / IL125-2B</strain>
    </source>
</reference>
<reference key="4">
    <citation type="journal article" date="2003" name="Nature">
        <title>Global analysis of protein localization in budding yeast.</title>
        <authorList>
            <person name="Huh W.-K."/>
            <person name="Falvo J.V."/>
            <person name="Gerke L.C."/>
            <person name="Carroll A.S."/>
            <person name="Howson R.W."/>
            <person name="Weissman J.S."/>
            <person name="O'Shea E.K."/>
        </authorList>
    </citation>
    <scope>SUBCELLULAR LOCATION [LARGE SCALE ANALYSIS]</scope>
</reference>
<reference key="5">
    <citation type="journal article" date="2003" name="Nature">
        <title>Global analysis of protein expression in yeast.</title>
        <authorList>
            <person name="Ghaemmaghami S."/>
            <person name="Huh W.-K."/>
            <person name="Bower K."/>
            <person name="Howson R.W."/>
            <person name="Belle A."/>
            <person name="Dephoure N."/>
            <person name="O'Shea E.K."/>
            <person name="Weissman J.S."/>
        </authorList>
    </citation>
    <scope>LEVEL OF PROTEIN EXPRESSION [LARGE SCALE ANALYSIS]</scope>
</reference>
<reference key="6">
    <citation type="journal article" date="2008" name="Mol. Cell">
        <title>A genetic interaction map of RNA-processing factors reveals links between Sem1/Dss1-containing complexes and mRNA export and splicing.</title>
        <authorList>
            <person name="Wilmes G.M."/>
            <person name="Bergkessel M."/>
            <person name="Bandyopadhyay S."/>
            <person name="Shales M."/>
            <person name="Braberg H."/>
            <person name="Cagney G."/>
            <person name="Collins S.R."/>
            <person name="Whitworth G.B."/>
            <person name="Kress T.L."/>
            <person name="Weissman J.S."/>
            <person name="Ideker T."/>
            <person name="Guthrie C."/>
            <person name="Krogan N.J."/>
        </authorList>
    </citation>
    <scope>FUNCTION</scope>
    <scope>INTERACTION WITH CSN12 AND SEM1</scope>
</reference>
<reference key="7">
    <citation type="journal article" date="2008" name="Mol. Cell. Proteomics">
        <title>A multidimensional chromatography technology for in-depth phosphoproteome analysis.</title>
        <authorList>
            <person name="Albuquerque C.P."/>
            <person name="Smolka M.B."/>
            <person name="Payne S.H."/>
            <person name="Bafna V."/>
            <person name="Eng J."/>
            <person name="Zhou H."/>
        </authorList>
    </citation>
    <scope>IDENTIFICATION BY MASS SPECTROMETRY [LARGE SCALE ANALYSIS]</scope>
</reference>
<reference key="8">
    <citation type="journal article" date="2009" name="J. Cell Biol.">
        <title>Sem1 is a functional component of the nuclear pore complex-associated messenger RNA export machinery.</title>
        <authorList>
            <person name="Faza M.B."/>
            <person name="Kemmler S."/>
            <person name="Jimeno S."/>
            <person name="Gonzalez-Aguilera C."/>
            <person name="Aguilera A."/>
            <person name="Hurt E."/>
            <person name="Panse V.G."/>
        </authorList>
    </citation>
    <scope>FUNCTION</scope>
    <scope>INTERACTION WITH CSN12 AND SEM1</scope>
</reference>
<reference key="9">
    <citation type="journal article" date="2011" name="Mol. Cell. Biol.">
        <title>New suppressors of THO mutations identify Thp3 (Ypr045c)-Csn12 as a protein complex involved in transcription elongation.</title>
        <authorList>
            <person name="Jimeno S."/>
            <person name="Tous C."/>
            <person name="Garcia-Rubio M.L."/>
            <person name="Ranes M."/>
            <person name="Gonzalez-Aguilera C."/>
            <person name="Marin A."/>
            <person name="Aguilera A."/>
        </authorList>
    </citation>
    <scope>FUNCTION</scope>
    <scope>INTERACTION WITH CSN12</scope>
</reference>
<reference key="10">
    <citation type="journal article" date="2012" name="Proc. Natl. Acad. Sci. U.S.A.">
        <title>N-terminal acetylome analyses and functional insights of the N-terminal acetyltransferase NatB.</title>
        <authorList>
            <person name="Van Damme P."/>
            <person name="Lasa M."/>
            <person name="Polevoda B."/>
            <person name="Gazquez C."/>
            <person name="Elosegui-Artola A."/>
            <person name="Kim D.S."/>
            <person name="De Juan-Pardo E."/>
            <person name="Demeyer K."/>
            <person name="Hole K."/>
            <person name="Larrea E."/>
            <person name="Timmerman E."/>
            <person name="Prieto J."/>
            <person name="Arnesen T."/>
            <person name="Sherman F."/>
            <person name="Gevaert K."/>
            <person name="Aldabe R."/>
        </authorList>
    </citation>
    <scope>ACETYLATION [LARGE SCALE ANALYSIS] AT MET-1</scope>
    <scope>IDENTIFICATION BY MASS SPECTROMETRY [LARGE SCALE ANALYSIS]</scope>
</reference>
<feature type="chain" id="PRO_0000257823" description="Protein THP3">
    <location>
        <begin position="1"/>
        <end position="470"/>
    </location>
</feature>
<feature type="domain" description="PCI" evidence="1">
    <location>
        <begin position="276"/>
        <end position="450"/>
    </location>
</feature>
<feature type="region of interest" description="Disordered" evidence="2">
    <location>
        <begin position="1"/>
        <end position="31"/>
    </location>
</feature>
<feature type="region of interest" description="Disordered" evidence="2">
    <location>
        <begin position="137"/>
        <end position="167"/>
    </location>
</feature>
<feature type="compositionally biased region" description="Polar residues" evidence="2">
    <location>
        <begin position="1"/>
        <end position="12"/>
    </location>
</feature>
<feature type="compositionally biased region" description="Polar residues" evidence="2">
    <location>
        <begin position="19"/>
        <end position="30"/>
    </location>
</feature>
<feature type="compositionally biased region" description="Polar residues" evidence="2">
    <location>
        <begin position="154"/>
        <end position="165"/>
    </location>
</feature>
<feature type="modified residue" description="N-acetylmethionine" evidence="9">
    <location>
        <position position="1"/>
    </location>
</feature>
<feature type="turn" evidence="10">
    <location>
        <begin position="209"/>
        <end position="211"/>
    </location>
</feature>
<feature type="helix" evidence="10">
    <location>
        <begin position="215"/>
        <end position="231"/>
    </location>
</feature>
<feature type="helix" evidence="10">
    <location>
        <begin position="236"/>
        <end position="252"/>
    </location>
</feature>
<feature type="helix" evidence="10">
    <location>
        <begin position="258"/>
        <end position="273"/>
    </location>
</feature>
<feature type="helix" evidence="10">
    <location>
        <begin position="277"/>
        <end position="291"/>
    </location>
</feature>
<feature type="helix" evidence="10">
    <location>
        <begin position="301"/>
        <end position="314"/>
    </location>
</feature>
<feature type="helix" evidence="10">
    <location>
        <begin position="318"/>
        <end position="330"/>
    </location>
</feature>
<feature type="helix" evidence="10">
    <location>
        <begin position="334"/>
        <end position="337"/>
    </location>
</feature>
<feature type="helix" evidence="10">
    <location>
        <begin position="340"/>
        <end position="353"/>
    </location>
</feature>
<feature type="helix" evidence="10">
    <location>
        <begin position="357"/>
        <end position="362"/>
    </location>
</feature>
<feature type="turn" evidence="11">
    <location>
        <begin position="363"/>
        <end position="366"/>
    </location>
</feature>
<feature type="helix" evidence="10">
    <location>
        <begin position="369"/>
        <end position="375"/>
    </location>
</feature>
<feature type="turn" evidence="10">
    <location>
        <begin position="376"/>
        <end position="378"/>
    </location>
</feature>
<feature type="helix" evidence="10">
    <location>
        <begin position="379"/>
        <end position="393"/>
    </location>
</feature>
<feature type="helix" evidence="10">
    <location>
        <begin position="399"/>
        <end position="405"/>
    </location>
</feature>
<feature type="helix" evidence="10">
    <location>
        <begin position="411"/>
        <end position="419"/>
    </location>
</feature>
<feature type="turn" evidence="10">
    <location>
        <begin position="420"/>
        <end position="422"/>
    </location>
</feature>
<feature type="helix" evidence="10">
    <location>
        <begin position="424"/>
        <end position="426"/>
    </location>
</feature>
<feature type="strand" evidence="10">
    <location>
        <begin position="427"/>
        <end position="432"/>
    </location>
</feature>
<feature type="strand" evidence="10">
    <location>
        <begin position="434"/>
        <end position="437"/>
    </location>
</feature>
<feature type="strand" evidence="10">
    <location>
        <begin position="440"/>
        <end position="445"/>
    </location>
</feature>
<feature type="helix" evidence="10">
    <location>
        <begin position="447"/>
        <end position="457"/>
    </location>
</feature>
<proteinExistence type="evidence at protein level"/>
<organism>
    <name type="scientific">Saccharomyces cerevisiae (strain ATCC 204508 / S288c)</name>
    <name type="common">Baker's yeast</name>
    <dbReference type="NCBI Taxonomy" id="559292"/>
    <lineage>
        <taxon>Eukaryota</taxon>
        <taxon>Fungi</taxon>
        <taxon>Dikarya</taxon>
        <taxon>Ascomycota</taxon>
        <taxon>Saccharomycotina</taxon>
        <taxon>Saccharomycetes</taxon>
        <taxon>Saccharomycetales</taxon>
        <taxon>Saccharomycetaceae</taxon>
        <taxon>Saccharomyces</taxon>
    </lineage>
</organism>
<dbReference type="EMBL" id="Z49219">
    <property type="protein sequence ID" value="CAA89165.1"/>
    <property type="molecule type" value="Genomic_DNA"/>
</dbReference>
<dbReference type="EMBL" id="Z71255">
    <property type="protein sequence ID" value="CAA94992.1"/>
    <property type="molecule type" value="Genomic_DNA"/>
</dbReference>
<dbReference type="EMBL" id="Z73616">
    <property type="protein sequence ID" value="CAA97994.1"/>
    <property type="molecule type" value="Genomic_DNA"/>
</dbReference>
<dbReference type="EMBL" id="BK006949">
    <property type="protein sequence ID" value="DAA11469.1"/>
    <property type="molecule type" value="Genomic_DNA"/>
</dbReference>
<dbReference type="PIR" id="S54069">
    <property type="entry name" value="S54069"/>
</dbReference>
<dbReference type="RefSeq" id="NP_015370.1">
    <property type="nucleotide sequence ID" value="NM_001184142.1"/>
</dbReference>
<dbReference type="PDB" id="7EWF">
    <property type="method" value="X-ray"/>
    <property type="resolution" value="2.85 A"/>
    <property type="chains" value="A=186-470"/>
</dbReference>
<dbReference type="PDB" id="7EWM">
    <property type="method" value="X-ray"/>
    <property type="resolution" value="2.90 A"/>
    <property type="chains" value="A=186-470"/>
</dbReference>
<dbReference type="PDBsum" id="7EWF"/>
<dbReference type="PDBsum" id="7EWM"/>
<dbReference type="SMR" id="Q12049"/>
<dbReference type="BioGRID" id="36221">
    <property type="interactions" value="339"/>
</dbReference>
<dbReference type="DIP" id="DIP-3903N"/>
<dbReference type="FunCoup" id="Q12049">
    <property type="interactions" value="71"/>
</dbReference>
<dbReference type="IntAct" id="Q12049">
    <property type="interactions" value="11"/>
</dbReference>
<dbReference type="MINT" id="Q12049"/>
<dbReference type="STRING" id="4932.YPR045C"/>
<dbReference type="TCDB" id="3.A.22.1.1">
    <property type="family name" value="the transcription-coupled trex/tap nuclear mrna export complex (trex) family"/>
</dbReference>
<dbReference type="iPTMnet" id="Q12049"/>
<dbReference type="PaxDb" id="4932-YPR045C"/>
<dbReference type="PeptideAtlas" id="Q12049"/>
<dbReference type="EnsemblFungi" id="YPR045C_mRNA">
    <property type="protein sequence ID" value="YPR045C"/>
    <property type="gene ID" value="YPR045C"/>
</dbReference>
<dbReference type="GeneID" id="856158"/>
<dbReference type="KEGG" id="sce:YPR045C"/>
<dbReference type="AGR" id="SGD:S000006249"/>
<dbReference type="SGD" id="S000006249">
    <property type="gene designation" value="THP3"/>
</dbReference>
<dbReference type="VEuPathDB" id="FungiDB:YPR045C"/>
<dbReference type="eggNOG" id="KOG1861">
    <property type="taxonomic scope" value="Eukaryota"/>
</dbReference>
<dbReference type="GeneTree" id="ENSGT00390000008006"/>
<dbReference type="HOGENOM" id="CLU_015513_4_2_1"/>
<dbReference type="InParanoid" id="Q12049"/>
<dbReference type="OMA" id="RETMNFK"/>
<dbReference type="OrthoDB" id="199574at2759"/>
<dbReference type="BioCyc" id="YEAST:G3O-34200-MONOMER"/>
<dbReference type="BioGRID-ORCS" id="856158">
    <property type="hits" value="0 hits in 10 CRISPR screens"/>
</dbReference>
<dbReference type="PRO" id="PR:Q12049"/>
<dbReference type="Proteomes" id="UP000002311">
    <property type="component" value="Chromosome XVI"/>
</dbReference>
<dbReference type="RNAct" id="Q12049">
    <property type="molecule type" value="protein"/>
</dbReference>
<dbReference type="GO" id="GO:0000791">
    <property type="term" value="C:euchromatin"/>
    <property type="evidence" value="ECO:0000314"/>
    <property type="project" value="SGD"/>
</dbReference>
<dbReference type="GO" id="GO:0005634">
    <property type="term" value="C:nucleus"/>
    <property type="evidence" value="ECO:0007005"/>
    <property type="project" value="SGD"/>
</dbReference>
<dbReference type="GO" id="GO:0000398">
    <property type="term" value="P:mRNA splicing, via spliceosome"/>
    <property type="evidence" value="ECO:0000315"/>
    <property type="project" value="SGD"/>
</dbReference>
<dbReference type="Gene3D" id="1.25.40.990">
    <property type="match status" value="1"/>
</dbReference>
<dbReference type="InterPro" id="IPR000717">
    <property type="entry name" value="PCI_dom"/>
</dbReference>
<dbReference type="InterPro" id="IPR045107">
    <property type="entry name" value="SAC3/GANP/THP3"/>
</dbReference>
<dbReference type="InterPro" id="IPR005062">
    <property type="entry name" value="SAC3/GANP/THP3_conserved"/>
</dbReference>
<dbReference type="PANTHER" id="PTHR12436">
    <property type="entry name" value="80 KDA MCM3-ASSOCIATED PROTEIN"/>
    <property type="match status" value="1"/>
</dbReference>
<dbReference type="PANTHER" id="PTHR12436:SF4">
    <property type="entry name" value="LEUKOCYTE RECEPTOR CLUSTER MEMBER 8"/>
    <property type="match status" value="1"/>
</dbReference>
<dbReference type="Pfam" id="PF03399">
    <property type="entry name" value="SAC3_GANP"/>
    <property type="match status" value="1"/>
</dbReference>
<dbReference type="PROSITE" id="PS50250">
    <property type="entry name" value="PCI"/>
    <property type="match status" value="1"/>
</dbReference>
<keyword id="KW-0002">3D-structure</keyword>
<keyword id="KW-0007">Acetylation</keyword>
<keyword id="KW-0539">Nucleus</keyword>
<keyword id="KW-1185">Reference proteome</keyword>
<keyword id="KW-0804">Transcription</keyword>
<keyword id="KW-0805">Transcription regulation</keyword>
<name>THP3_YEAST</name>
<sequence>MQNPYGHFTNNTTEDREASSQGGPFGQSLNRPLDYAGSFPSLTYNNNNFIANQQPSLPLPEPRLSWNNVNQVSNPLMVTPLPGLQKRMNKNIKKKLPRVSKKASALSNGVSGNVMSNSNIVGHGAVGSASGWKVEMGGSDELERRKRRAERFSQGPSATTNSNDNLNEDFANLNAISSKSHQYDKKIHVVGRCQTLEKSYLRLTSEPNPDLIRPPNILQKMYCLLMDKYQSKTATYTYLCDQFKSMRQDLRVQMIENSFTIKVYQTHARIALENGDLGEFNQCQNRIMALFENPTIPKKSYSEFICYSVLYSMLTEDYPSISHLKLKLIDDGSSEILEDEHVKMIFELSDMKLVGNYHYFMKNYLKLHKFEKCLINSFLNLEKLIFLTIICKSYNQVNLDFVKSEFNFNSIEETTNFLNEQNLTEFILNKQITDSNGKSSNIKILNTKGCRVQLIQNYMKSKKIDIKGQK</sequence>